<sequence length="95" mass="10812">MKKTSLKLMTLVLGFCFVIYLLQGPRGGSRNGDLLIARKLISLEPIETKNAARSLKDSISTDLEEEVDRLMEHEYPSPVKPRKRTPVHNGVRNRH</sequence>
<gene>
    <name evidence="7" type="primary">GLV9</name>
    <name evidence="10" type="ordered locus">At5g15725</name>
    <name evidence="11" type="ORF">F14F8</name>
</gene>
<feature type="signal peptide" evidence="4">
    <location>
        <begin position="1"/>
        <end position="24"/>
    </location>
</feature>
<feature type="propeptide" id="PRO_0000451981" evidence="2">
    <location>
        <begin position="25"/>
        <end position="73"/>
    </location>
</feature>
<feature type="peptide" id="PRO_0000451982" description="GLV9p">
    <location>
        <begin position="74"/>
        <end position="89"/>
    </location>
</feature>
<feature type="propeptide" id="PRO_0000451983" evidence="2">
    <location>
        <begin position="90"/>
        <end position="95"/>
    </location>
</feature>
<feature type="region of interest" description="Disordered" evidence="5">
    <location>
        <begin position="72"/>
        <end position="95"/>
    </location>
</feature>
<feature type="compositionally biased region" description="Basic residues" evidence="5">
    <location>
        <begin position="80"/>
        <end position="95"/>
    </location>
</feature>
<feature type="modified residue" description="Sulfotyrosine" evidence="2">
    <location>
        <position position="75"/>
    </location>
</feature>
<feature type="modified residue" description="Hydroxyproline" evidence="1">
    <location>
        <position position="86"/>
    </location>
</feature>
<keyword id="KW-0221">Differentiation</keyword>
<keyword id="KW-0339">Growth factor</keyword>
<keyword id="KW-0379">Hydroxylation</keyword>
<keyword id="KW-1185">Reference proteome</keyword>
<keyword id="KW-0964">Secreted</keyword>
<keyword id="KW-0732">Signal</keyword>
<keyword id="KW-0765">Sulfation</keyword>
<comment type="function">
    <molecule>GLV9p</molecule>
    <text evidence="6">Signaling peptide (root growth factor) required during root gravitropism in a PIN2-traffic dependent manner (PubMed:23370719). Regulates the pattern of root growth and lateral root development by modulating the length and the number of cortical cells in the root apical meristem (RAM), and the anticlinal asymmetric cell divisions in lateral root initiation cells (PubMed:23370719).</text>
</comment>
<comment type="subunit">
    <molecule>GLV9p</molecule>
    <text evidence="3">Binds to LRR receptor-like serine/threonine-protein kinases to trigger their dimerization with SERK proteins and subsequent signaling.</text>
</comment>
<comment type="subcellular location">
    <molecule>GLV9p</molecule>
    <subcellularLocation>
        <location evidence="2">Secreted</location>
    </subcellularLocation>
</comment>
<comment type="tissue specificity">
    <text evidence="6">Expressed in roots.</text>
</comment>
<comment type="developmental stage">
    <text evidence="6">In roots, restricted to the root apical meristem (RAM) in a pattern positioned just above the quiescent center (QC); strongest levels are observed in the meristematic cortical cells, but also detected in the epidermis and within the vasculature (PubMed:23370719). Induced during lateral root formation after the emergence of the primordium (PubMed:23370719).</text>
</comment>
<comment type="miscellaneous">
    <text evidence="9">'Golven' means irregular waves in Dutch.</text>
</comment>
<comment type="similarity">
    <text evidence="8">Belongs to the RGF family.</text>
</comment>
<accession>F4KB79</accession>
<proteinExistence type="evidence at transcript level"/>
<protein>
    <recommendedName>
        <fullName evidence="7">Protein GOLVEN 9</fullName>
    </recommendedName>
    <component>
        <recommendedName>
            <fullName evidence="7">GLV9p</fullName>
        </recommendedName>
    </component>
</protein>
<evidence type="ECO:0000250" key="1">
    <source>
        <dbReference type="UniProtKB" id="O49519"/>
    </source>
</evidence>
<evidence type="ECO:0000250" key="2">
    <source>
        <dbReference type="UniProtKB" id="Q3E880"/>
    </source>
</evidence>
<evidence type="ECO:0000250" key="3">
    <source>
        <dbReference type="UniProtKB" id="Q9LI64"/>
    </source>
</evidence>
<evidence type="ECO:0000255" key="4"/>
<evidence type="ECO:0000256" key="5">
    <source>
        <dbReference type="SAM" id="MobiDB-lite"/>
    </source>
</evidence>
<evidence type="ECO:0000269" key="6">
    <source>
    </source>
</evidence>
<evidence type="ECO:0000303" key="7">
    <source>
    </source>
</evidence>
<evidence type="ECO:0000305" key="8"/>
<evidence type="ECO:0000305" key="9">
    <source>
    </source>
</evidence>
<evidence type="ECO:0000312" key="10">
    <source>
        <dbReference type="Araport" id="AT5G15725"/>
    </source>
</evidence>
<evidence type="ECO:0000312" key="11">
    <source>
        <dbReference type="EMBL" id="AL391144"/>
    </source>
</evidence>
<reference key="1">
    <citation type="journal article" date="2000" name="Nature">
        <title>Sequence and analysis of chromosome 5 of the plant Arabidopsis thaliana.</title>
        <authorList>
            <person name="Tabata S."/>
            <person name="Kaneko T."/>
            <person name="Nakamura Y."/>
            <person name="Kotani H."/>
            <person name="Kato T."/>
            <person name="Asamizu E."/>
            <person name="Miyajima N."/>
            <person name="Sasamoto S."/>
            <person name="Kimura T."/>
            <person name="Hosouchi T."/>
            <person name="Kawashima K."/>
            <person name="Kohara M."/>
            <person name="Matsumoto M."/>
            <person name="Matsuno A."/>
            <person name="Muraki A."/>
            <person name="Nakayama S."/>
            <person name="Nakazaki N."/>
            <person name="Naruo K."/>
            <person name="Okumura S."/>
            <person name="Shinpo S."/>
            <person name="Takeuchi C."/>
            <person name="Wada T."/>
            <person name="Watanabe A."/>
            <person name="Yamada M."/>
            <person name="Yasuda M."/>
            <person name="Sato S."/>
            <person name="de la Bastide M."/>
            <person name="Huang E."/>
            <person name="Spiegel L."/>
            <person name="Gnoj L."/>
            <person name="O'Shaughnessy A."/>
            <person name="Preston R."/>
            <person name="Habermann K."/>
            <person name="Murray J."/>
            <person name="Johnson D."/>
            <person name="Rohlfing T."/>
            <person name="Nelson J."/>
            <person name="Stoneking T."/>
            <person name="Pepin K."/>
            <person name="Spieth J."/>
            <person name="Sekhon M."/>
            <person name="Armstrong J."/>
            <person name="Becker M."/>
            <person name="Belter E."/>
            <person name="Cordum H."/>
            <person name="Cordes M."/>
            <person name="Courtney L."/>
            <person name="Courtney W."/>
            <person name="Dante M."/>
            <person name="Du H."/>
            <person name="Edwards J."/>
            <person name="Fryman J."/>
            <person name="Haakensen B."/>
            <person name="Lamar E."/>
            <person name="Latreille P."/>
            <person name="Leonard S."/>
            <person name="Meyer R."/>
            <person name="Mulvaney E."/>
            <person name="Ozersky P."/>
            <person name="Riley A."/>
            <person name="Strowmatt C."/>
            <person name="Wagner-McPherson C."/>
            <person name="Wollam A."/>
            <person name="Yoakum M."/>
            <person name="Bell M."/>
            <person name="Dedhia N."/>
            <person name="Parnell L."/>
            <person name="Shah R."/>
            <person name="Rodriguez M."/>
            <person name="Hoon See L."/>
            <person name="Vil D."/>
            <person name="Baker J."/>
            <person name="Kirchoff K."/>
            <person name="Toth K."/>
            <person name="King L."/>
            <person name="Bahret A."/>
            <person name="Miller B."/>
            <person name="Marra M.A."/>
            <person name="Martienssen R."/>
            <person name="McCombie W.R."/>
            <person name="Wilson R.K."/>
            <person name="Murphy G."/>
            <person name="Bancroft I."/>
            <person name="Volckaert G."/>
            <person name="Wambutt R."/>
            <person name="Duesterhoeft A."/>
            <person name="Stiekema W."/>
            <person name="Pohl T."/>
            <person name="Entian K.-D."/>
            <person name="Terryn N."/>
            <person name="Hartley N."/>
            <person name="Bent E."/>
            <person name="Johnson S."/>
            <person name="Langham S.-A."/>
            <person name="McCullagh B."/>
            <person name="Robben J."/>
            <person name="Grymonprez B."/>
            <person name="Zimmermann W."/>
            <person name="Ramsperger U."/>
            <person name="Wedler H."/>
            <person name="Balke K."/>
            <person name="Wedler E."/>
            <person name="Peters S."/>
            <person name="van Staveren M."/>
            <person name="Dirkse W."/>
            <person name="Mooijman P."/>
            <person name="Klein Lankhorst R."/>
            <person name="Weitzenegger T."/>
            <person name="Bothe G."/>
            <person name="Rose M."/>
            <person name="Hauf J."/>
            <person name="Berneiser S."/>
            <person name="Hempel S."/>
            <person name="Feldpausch M."/>
            <person name="Lamberth S."/>
            <person name="Villarroel R."/>
            <person name="Gielen J."/>
            <person name="Ardiles W."/>
            <person name="Bents O."/>
            <person name="Lemcke K."/>
            <person name="Kolesov G."/>
            <person name="Mayer K.F.X."/>
            <person name="Rudd S."/>
            <person name="Schoof H."/>
            <person name="Schueller C."/>
            <person name="Zaccaria P."/>
            <person name="Mewes H.-W."/>
            <person name="Bevan M."/>
            <person name="Fransz P.F."/>
        </authorList>
    </citation>
    <scope>NUCLEOTIDE SEQUENCE [LARGE SCALE GENOMIC DNA]</scope>
    <source>
        <strain>cv. Columbia</strain>
    </source>
</reference>
<reference key="2">
    <citation type="journal article" date="2017" name="Plant J.">
        <title>Araport11: a complete reannotation of the Arabidopsis thaliana reference genome.</title>
        <authorList>
            <person name="Cheng C.Y."/>
            <person name="Krishnakumar V."/>
            <person name="Chan A.P."/>
            <person name="Thibaud-Nissen F."/>
            <person name="Schobel S."/>
            <person name="Town C.D."/>
        </authorList>
    </citation>
    <scope>GENOME REANNOTATION</scope>
    <source>
        <strain>cv. Columbia</strain>
    </source>
</reference>
<reference key="3">
    <citation type="journal article" date="2013" name="Plant Physiol.">
        <title>Transcriptional and functional classification of the GOLVEN/ROOT GROWTH FACTOR/CLE-like signaling peptides reveals their role in lateral root and hair formation.</title>
        <authorList>
            <person name="Fernandez A."/>
            <person name="Drozdzecki A."/>
            <person name="Hoogewijs K."/>
            <person name="Nguyen A."/>
            <person name="Beeckman T."/>
            <person name="Madder A."/>
            <person name="Hilson P."/>
        </authorList>
    </citation>
    <scope>FUNCTION</scope>
    <scope>TISSUE SPECIFICITY</scope>
    <scope>DEVELOPMENTAL STAGE</scope>
    <source>
        <strain>cv. Columbia</strain>
    </source>
</reference>
<organism>
    <name type="scientific">Arabidopsis thaliana</name>
    <name type="common">Mouse-ear cress</name>
    <dbReference type="NCBI Taxonomy" id="3702"/>
    <lineage>
        <taxon>Eukaryota</taxon>
        <taxon>Viridiplantae</taxon>
        <taxon>Streptophyta</taxon>
        <taxon>Embryophyta</taxon>
        <taxon>Tracheophyta</taxon>
        <taxon>Spermatophyta</taxon>
        <taxon>Magnoliopsida</taxon>
        <taxon>eudicotyledons</taxon>
        <taxon>Gunneridae</taxon>
        <taxon>Pentapetalae</taxon>
        <taxon>rosids</taxon>
        <taxon>malvids</taxon>
        <taxon>Brassicales</taxon>
        <taxon>Brassicaceae</taxon>
        <taxon>Camelineae</taxon>
        <taxon>Arabidopsis</taxon>
    </lineage>
</organism>
<name>GLV9_ARATH</name>
<dbReference type="EMBL" id="AL391144">
    <property type="status" value="NOT_ANNOTATED_CDS"/>
    <property type="molecule type" value="Genomic_DNA"/>
</dbReference>
<dbReference type="EMBL" id="CP002688">
    <property type="protein sequence ID" value="AED92197.1"/>
    <property type="molecule type" value="Genomic_DNA"/>
</dbReference>
<dbReference type="RefSeq" id="NP_568319.1">
    <property type="nucleotide sequence ID" value="NM_121577.4"/>
</dbReference>
<dbReference type="STRING" id="3702.F4KB79"/>
<dbReference type="PaxDb" id="3702-AT5G15725.1"/>
<dbReference type="EnsemblPlants" id="AT5G15725.1">
    <property type="protein sequence ID" value="AT5G15725.1"/>
    <property type="gene ID" value="AT5G15725"/>
</dbReference>
<dbReference type="GeneID" id="831428"/>
<dbReference type="Gramene" id="AT5G15725.1">
    <property type="protein sequence ID" value="AT5G15725.1"/>
    <property type="gene ID" value="AT5G15725"/>
</dbReference>
<dbReference type="KEGG" id="ath:AT5G15725"/>
<dbReference type="Araport" id="AT5G15725"/>
<dbReference type="TAIR" id="AT5G15725">
    <property type="gene designation" value="GLV9"/>
</dbReference>
<dbReference type="HOGENOM" id="CLU_2375704_0_0_1"/>
<dbReference type="InParanoid" id="F4KB79"/>
<dbReference type="OMA" id="RTPVHNG"/>
<dbReference type="OrthoDB" id="1077183at2759"/>
<dbReference type="PhylomeDB" id="F4KB79"/>
<dbReference type="PRO" id="PR:F4KB79"/>
<dbReference type="Proteomes" id="UP000006548">
    <property type="component" value="Chromosome 5"/>
</dbReference>
<dbReference type="ExpressionAtlas" id="F4KB79">
    <property type="expression patterns" value="baseline and differential"/>
</dbReference>
<dbReference type="GO" id="GO:0005576">
    <property type="term" value="C:extracellular region"/>
    <property type="evidence" value="ECO:0007669"/>
    <property type="project" value="UniProtKB-SubCell"/>
</dbReference>
<dbReference type="GO" id="GO:0008083">
    <property type="term" value="F:growth factor activity"/>
    <property type="evidence" value="ECO:0007669"/>
    <property type="project" value="UniProtKB-KW"/>
</dbReference>
<dbReference type="GO" id="GO:0030154">
    <property type="term" value="P:cell differentiation"/>
    <property type="evidence" value="ECO:0007669"/>
    <property type="project" value="UniProtKB-KW"/>
</dbReference>
<dbReference type="GO" id="GO:0009958">
    <property type="term" value="P:positive gravitropism"/>
    <property type="evidence" value="ECO:0000315"/>
    <property type="project" value="TAIR"/>
</dbReference>